<keyword id="KW-0131">Cell cycle</keyword>
<keyword id="KW-0132">Cell division</keyword>
<keyword id="KW-0227">DNA damage</keyword>
<keyword id="KW-0717">Septation</keyword>
<keyword id="KW-0742">SOS response</keyword>
<proteinExistence type="inferred from homology"/>
<comment type="function">
    <text evidence="1">Component of the SOS system and an inhibitor of cell division. Accumulation of SulA causes rapid cessation of cell division and the appearance of long, non-septate filaments. In the presence of GTP, binds a polymerization-competent form of FtsZ in a 1:1 ratio, thus inhibiting FtsZ polymerization and therefore preventing it from participating in the assembly of the Z ring. This mechanism prevents the premature segregation of damaged DNA to daughter cells during cell division.</text>
</comment>
<comment type="subunit">
    <text evidence="1">Interacts with FtsZ.</text>
</comment>
<comment type="induction">
    <text evidence="1">By DNA damage, as part of the SOS response.</text>
</comment>
<comment type="PTM">
    <text evidence="1">Is rapidly cleaved and degraded by the Lon protease once DNA damage is repaired.</text>
</comment>
<comment type="similarity">
    <text evidence="1">Belongs to the SulA family.</text>
</comment>
<sequence>MRTQSLYQPHFGHGSYTTRNVAKNTDIGKENGLISELVYNERQPAVAQLLLPLLLQLGKQSRWLLWLTPQQKLSKQWLQQSGLPVDKMVQLSQISPVNTVEAMEKALQTGNYSVVLGWLPELTEEDRLKLRRAAELGNAYGFIMRPQRDISPTHGHCSTLKIHSSLYH</sequence>
<reference key="1">
    <citation type="journal article" date="1987" name="Gene">
        <title>Evolution of the enterobacterial sulA gene: a component of the SOS system encoding an inhibitor of cell division.</title>
        <authorList>
            <person name="Freudl R."/>
            <person name="Braun G."/>
            <person name="Honore N."/>
            <person name="Cole S.T."/>
        </authorList>
    </citation>
    <scope>NUCLEOTIDE SEQUENCE [GENOMIC DNA]</scope>
</reference>
<name>SULA_SERMA</name>
<evidence type="ECO:0000255" key="1">
    <source>
        <dbReference type="HAMAP-Rule" id="MF_01179"/>
    </source>
</evidence>
<organism>
    <name type="scientific">Serratia marcescens</name>
    <dbReference type="NCBI Taxonomy" id="615"/>
    <lineage>
        <taxon>Bacteria</taxon>
        <taxon>Pseudomonadati</taxon>
        <taxon>Pseudomonadota</taxon>
        <taxon>Gammaproteobacteria</taxon>
        <taxon>Enterobacterales</taxon>
        <taxon>Yersiniaceae</taxon>
        <taxon>Serratia</taxon>
    </lineage>
</organism>
<accession>P08845</accession>
<gene>
    <name evidence="1" type="primary">sulA</name>
</gene>
<feature type="chain" id="PRO_0000072310" description="Cell division inhibitor SulA">
    <location>
        <begin position="1"/>
        <end position="168"/>
    </location>
</feature>
<feature type="region of interest" description="FtsZ binding" evidence="1">
    <location>
        <begin position="106"/>
        <end position="112"/>
    </location>
</feature>
<feature type="region of interest" description="Lon protease binding" evidence="1">
    <location>
        <begin position="161"/>
        <end position="168"/>
    </location>
</feature>
<feature type="site" description="Essential for degradation by Lon protease" evidence="1">
    <location>
        <position position="168"/>
    </location>
</feature>
<dbReference type="EMBL" id="M16468">
    <property type="protein sequence ID" value="AAA26582.1"/>
    <property type="molecule type" value="Genomic_DNA"/>
</dbReference>
<dbReference type="PIR" id="D29016">
    <property type="entry name" value="D29016"/>
</dbReference>
<dbReference type="RefSeq" id="WP_015377359.1">
    <property type="nucleotide sequence ID" value="NZ_VOUW01000007.1"/>
</dbReference>
<dbReference type="SMR" id="P08845"/>
<dbReference type="STRING" id="273526.SMDB11_1038"/>
<dbReference type="GeneID" id="93696278"/>
<dbReference type="PATRIC" id="fig|615.99.peg.3757"/>
<dbReference type="GO" id="GO:0000917">
    <property type="term" value="P:division septum assembly"/>
    <property type="evidence" value="ECO:0007669"/>
    <property type="project" value="UniProtKB-KW"/>
</dbReference>
<dbReference type="GO" id="GO:0006281">
    <property type="term" value="P:DNA repair"/>
    <property type="evidence" value="ECO:0007669"/>
    <property type="project" value="TreeGrafter"/>
</dbReference>
<dbReference type="GO" id="GO:0051782">
    <property type="term" value="P:negative regulation of cell division"/>
    <property type="evidence" value="ECO:0007669"/>
    <property type="project" value="UniProtKB-UniRule"/>
</dbReference>
<dbReference type="GO" id="GO:0009432">
    <property type="term" value="P:SOS response"/>
    <property type="evidence" value="ECO:0007669"/>
    <property type="project" value="UniProtKB-UniRule"/>
</dbReference>
<dbReference type="Gene3D" id="3.40.50.300">
    <property type="entry name" value="P-loop containing nucleotide triphosphate hydrolases"/>
    <property type="match status" value="1"/>
</dbReference>
<dbReference type="HAMAP" id="MF_01179">
    <property type="entry name" value="SulA"/>
    <property type="match status" value="1"/>
</dbReference>
<dbReference type="InterPro" id="IPR004596">
    <property type="entry name" value="Cell_div_suppressor_SulA"/>
</dbReference>
<dbReference type="InterPro" id="IPR027417">
    <property type="entry name" value="P-loop_NTPase"/>
</dbReference>
<dbReference type="InterPro" id="IPR050356">
    <property type="entry name" value="SulA_CellDiv_inhibitor"/>
</dbReference>
<dbReference type="InterPro" id="IPR047696">
    <property type="entry name" value="SulA_enterobact"/>
</dbReference>
<dbReference type="NCBIfam" id="NF007892">
    <property type="entry name" value="PRK10595.1"/>
    <property type="match status" value="1"/>
</dbReference>
<dbReference type="NCBIfam" id="TIGR00623">
    <property type="entry name" value="SOS_SulA_coli"/>
    <property type="match status" value="1"/>
</dbReference>
<dbReference type="PANTHER" id="PTHR35369">
    <property type="entry name" value="BLR3025 PROTEIN-RELATED"/>
    <property type="match status" value="1"/>
</dbReference>
<dbReference type="PANTHER" id="PTHR35369:SF4">
    <property type="entry name" value="CELL DIVISION INHIBITOR SULA"/>
    <property type="match status" value="1"/>
</dbReference>
<dbReference type="Pfam" id="PF03846">
    <property type="entry name" value="SulA"/>
    <property type="match status" value="1"/>
</dbReference>
<dbReference type="PIRSF" id="PIRSF003093">
    <property type="entry name" value="SulA"/>
    <property type="match status" value="1"/>
</dbReference>
<dbReference type="SUPFAM" id="SSF52540">
    <property type="entry name" value="P-loop containing nucleoside triphosphate hydrolases"/>
    <property type="match status" value="1"/>
</dbReference>
<protein>
    <recommendedName>
        <fullName evidence="1">Cell division inhibitor SulA</fullName>
    </recommendedName>
</protein>